<sequence length="227" mass="24636">MAWKSGGASHSELIHNLRKNGIIKTDKVFEVMLATDRSHYAKCNPYMDSPQSIGFQATISAPHMHAYALELLFDQLHEGAKALDVGSGSGILTACFARMVGCTGKVIGIDHIKELVDDSVNNVRKDDPTLLSSGRVQLVVGDGRMGYAEEAPYDAIHVGAAAPVVPQALIDQLKPGGRLILPVGPAGGNQMLEQYDKLQDGSIKMKPLMGVIYVPLTDKEKQWSRWK</sequence>
<name>PIMT_HUMAN</name>
<reference key="1">
    <citation type="journal article" date="1989" name="J. Biol. Chem.">
        <title>Sequence of the D-aspartyl/L-isoaspartyl protein methyltransferase from human erythrocytes. Common sequence motifs for protein, DNA, RNA, and small molecule S-adenosylmethionine-dependent methyltransferases.</title>
        <authorList>
            <person name="Ingrosso D."/>
            <person name="Fowler A.V."/>
            <person name="Bleibaum J."/>
            <person name="Clarke S."/>
        </authorList>
    </citation>
    <scope>PROTEIN SEQUENCE (ISOFORM 1)</scope>
    <scope>ACETYLATION AT ALA-2</scope>
    <scope>CLEAVAGE OF INITIATOR METHIONINE</scope>
    <source>
        <tissue>Erythrocyte</tissue>
    </source>
</reference>
<reference key="2">
    <citation type="journal article" date="1992" name="Biochem. Biophys. Res. Commun.">
        <title>Alternative splicing of the human isoaspartyl protein carboxyl methyltransferase RNA leads to the generation of a C-terminal -RDEL sequence in isozyme II.</title>
        <authorList>
            <person name="Maclaren D.C."/>
            <person name="Kagan R.M."/>
            <person name="Clarke S."/>
        </authorList>
    </citation>
    <scope>NUCLEOTIDE SEQUENCE [MRNA] (ISOFORMS 1 AND 2)</scope>
    <scope>VARIANT ILE-120</scope>
    <source>
        <tissue>Brain cortex</tissue>
    </source>
</reference>
<reference key="3">
    <citation type="journal article" date="1995" name="J. Biochem.">
        <title>Characterization of three cDNAs encoding two isozymes of an isoaspartyl protein carboxyl methyltransferase from human erythroid leukemia cells.</title>
        <authorList>
            <person name="Takeda R."/>
            <person name="Mizobuchi M."/>
            <person name="Murao K."/>
            <person name="Sato M."/>
            <person name="Takahara J."/>
        </authorList>
    </citation>
    <scope>NUCLEOTIDE SEQUENCE [MRNA] (ISOFORMS 1 AND 2)</scope>
</reference>
<reference key="4">
    <citation type="submission" date="1994-04" db="EMBL/GenBank/DDBJ databases">
        <title>Gene expression of carboxyl methyltransferase is altered in Alzheimer's disease and the product is localized to neurofibrillary tangles.</title>
        <authorList>
            <person name="Shirasawa T."/>
            <person name="Takahashi H."/>
            <person name="Endoh R."/>
            <person name="Sakamoto K."/>
            <person name="Hirokawa K."/>
            <person name="Mori H."/>
        </authorList>
    </citation>
    <scope>NUCLEOTIDE SEQUENCE [MRNA] (ISOFORM 2)</scope>
    <source>
        <tissue>Brain</tissue>
    </source>
</reference>
<reference key="5">
    <citation type="journal article" date="2004" name="Nat. Genet.">
        <title>Complete sequencing and characterization of 21,243 full-length human cDNAs.</title>
        <authorList>
            <person name="Ota T."/>
            <person name="Suzuki Y."/>
            <person name="Nishikawa T."/>
            <person name="Otsuki T."/>
            <person name="Sugiyama T."/>
            <person name="Irie R."/>
            <person name="Wakamatsu A."/>
            <person name="Hayashi K."/>
            <person name="Sato H."/>
            <person name="Nagai K."/>
            <person name="Kimura K."/>
            <person name="Makita H."/>
            <person name="Sekine M."/>
            <person name="Obayashi M."/>
            <person name="Nishi T."/>
            <person name="Shibahara T."/>
            <person name="Tanaka T."/>
            <person name="Ishii S."/>
            <person name="Yamamoto J."/>
            <person name="Saito K."/>
            <person name="Kawai Y."/>
            <person name="Isono Y."/>
            <person name="Nakamura Y."/>
            <person name="Nagahari K."/>
            <person name="Murakami K."/>
            <person name="Yasuda T."/>
            <person name="Iwayanagi T."/>
            <person name="Wagatsuma M."/>
            <person name="Shiratori A."/>
            <person name="Sudo H."/>
            <person name="Hosoiri T."/>
            <person name="Kaku Y."/>
            <person name="Kodaira H."/>
            <person name="Kondo H."/>
            <person name="Sugawara M."/>
            <person name="Takahashi M."/>
            <person name="Kanda K."/>
            <person name="Yokoi T."/>
            <person name="Furuya T."/>
            <person name="Kikkawa E."/>
            <person name="Omura Y."/>
            <person name="Abe K."/>
            <person name="Kamihara K."/>
            <person name="Katsuta N."/>
            <person name="Sato K."/>
            <person name="Tanikawa M."/>
            <person name="Yamazaki M."/>
            <person name="Ninomiya K."/>
            <person name="Ishibashi T."/>
            <person name="Yamashita H."/>
            <person name="Murakawa K."/>
            <person name="Fujimori K."/>
            <person name="Tanai H."/>
            <person name="Kimata M."/>
            <person name="Watanabe M."/>
            <person name="Hiraoka S."/>
            <person name="Chiba Y."/>
            <person name="Ishida S."/>
            <person name="Ono Y."/>
            <person name="Takiguchi S."/>
            <person name="Watanabe S."/>
            <person name="Yosida M."/>
            <person name="Hotuta T."/>
            <person name="Kusano J."/>
            <person name="Kanehori K."/>
            <person name="Takahashi-Fujii A."/>
            <person name="Hara H."/>
            <person name="Tanase T.-O."/>
            <person name="Nomura Y."/>
            <person name="Togiya S."/>
            <person name="Komai F."/>
            <person name="Hara R."/>
            <person name="Takeuchi K."/>
            <person name="Arita M."/>
            <person name="Imose N."/>
            <person name="Musashino K."/>
            <person name="Yuuki H."/>
            <person name="Oshima A."/>
            <person name="Sasaki N."/>
            <person name="Aotsuka S."/>
            <person name="Yoshikawa Y."/>
            <person name="Matsunawa H."/>
            <person name="Ichihara T."/>
            <person name="Shiohata N."/>
            <person name="Sano S."/>
            <person name="Moriya S."/>
            <person name="Momiyama H."/>
            <person name="Satoh N."/>
            <person name="Takami S."/>
            <person name="Terashima Y."/>
            <person name="Suzuki O."/>
            <person name="Nakagawa S."/>
            <person name="Senoh A."/>
            <person name="Mizoguchi H."/>
            <person name="Goto Y."/>
            <person name="Shimizu F."/>
            <person name="Wakebe H."/>
            <person name="Hishigaki H."/>
            <person name="Watanabe T."/>
            <person name="Sugiyama A."/>
            <person name="Takemoto M."/>
            <person name="Kawakami B."/>
            <person name="Yamazaki M."/>
            <person name="Watanabe K."/>
            <person name="Kumagai A."/>
            <person name="Itakura S."/>
            <person name="Fukuzumi Y."/>
            <person name="Fujimori Y."/>
            <person name="Komiyama M."/>
            <person name="Tashiro H."/>
            <person name="Tanigami A."/>
            <person name="Fujiwara T."/>
            <person name="Ono T."/>
            <person name="Yamada K."/>
            <person name="Fujii Y."/>
            <person name="Ozaki K."/>
            <person name="Hirao M."/>
            <person name="Ohmori Y."/>
            <person name="Kawabata A."/>
            <person name="Hikiji T."/>
            <person name="Kobatake N."/>
            <person name="Inagaki H."/>
            <person name="Ikema Y."/>
            <person name="Okamoto S."/>
            <person name="Okitani R."/>
            <person name="Kawakami T."/>
            <person name="Noguchi S."/>
            <person name="Itoh T."/>
            <person name="Shigeta K."/>
            <person name="Senba T."/>
            <person name="Matsumura K."/>
            <person name="Nakajima Y."/>
            <person name="Mizuno T."/>
            <person name="Morinaga M."/>
            <person name="Sasaki M."/>
            <person name="Togashi T."/>
            <person name="Oyama M."/>
            <person name="Hata H."/>
            <person name="Watanabe M."/>
            <person name="Komatsu T."/>
            <person name="Mizushima-Sugano J."/>
            <person name="Satoh T."/>
            <person name="Shirai Y."/>
            <person name="Takahashi Y."/>
            <person name="Nakagawa K."/>
            <person name="Okumura K."/>
            <person name="Nagase T."/>
            <person name="Nomura N."/>
            <person name="Kikuchi H."/>
            <person name="Masuho Y."/>
            <person name="Yamashita R."/>
            <person name="Nakai K."/>
            <person name="Yada T."/>
            <person name="Nakamura Y."/>
            <person name="Ohara O."/>
            <person name="Isogai T."/>
            <person name="Sugano S."/>
        </authorList>
    </citation>
    <scope>NUCLEOTIDE SEQUENCE [LARGE SCALE MRNA] (ISOFORM 1)</scope>
    <source>
        <tissue>Brain</tissue>
    </source>
</reference>
<reference key="6">
    <citation type="journal article" date="2003" name="Nature">
        <title>The DNA sequence and analysis of human chromosome 6.</title>
        <authorList>
            <person name="Mungall A.J."/>
            <person name="Palmer S.A."/>
            <person name="Sims S.K."/>
            <person name="Edwards C.A."/>
            <person name="Ashurst J.L."/>
            <person name="Wilming L."/>
            <person name="Jones M.C."/>
            <person name="Horton R."/>
            <person name="Hunt S.E."/>
            <person name="Scott C.E."/>
            <person name="Gilbert J.G.R."/>
            <person name="Clamp M.E."/>
            <person name="Bethel G."/>
            <person name="Milne S."/>
            <person name="Ainscough R."/>
            <person name="Almeida J.P."/>
            <person name="Ambrose K.D."/>
            <person name="Andrews T.D."/>
            <person name="Ashwell R.I.S."/>
            <person name="Babbage A.K."/>
            <person name="Bagguley C.L."/>
            <person name="Bailey J."/>
            <person name="Banerjee R."/>
            <person name="Barker D.J."/>
            <person name="Barlow K.F."/>
            <person name="Bates K."/>
            <person name="Beare D.M."/>
            <person name="Beasley H."/>
            <person name="Beasley O."/>
            <person name="Bird C.P."/>
            <person name="Blakey S.E."/>
            <person name="Bray-Allen S."/>
            <person name="Brook J."/>
            <person name="Brown A.J."/>
            <person name="Brown J.Y."/>
            <person name="Burford D.C."/>
            <person name="Burrill W."/>
            <person name="Burton J."/>
            <person name="Carder C."/>
            <person name="Carter N.P."/>
            <person name="Chapman J.C."/>
            <person name="Clark S.Y."/>
            <person name="Clark G."/>
            <person name="Clee C.M."/>
            <person name="Clegg S."/>
            <person name="Cobley V."/>
            <person name="Collier R.E."/>
            <person name="Collins J.E."/>
            <person name="Colman L.K."/>
            <person name="Corby N.R."/>
            <person name="Coville G.J."/>
            <person name="Culley K.M."/>
            <person name="Dhami P."/>
            <person name="Davies J."/>
            <person name="Dunn M."/>
            <person name="Earthrowl M.E."/>
            <person name="Ellington A.E."/>
            <person name="Evans K.A."/>
            <person name="Faulkner L."/>
            <person name="Francis M.D."/>
            <person name="Frankish A."/>
            <person name="Frankland J."/>
            <person name="French L."/>
            <person name="Garner P."/>
            <person name="Garnett J."/>
            <person name="Ghori M.J."/>
            <person name="Gilby L.M."/>
            <person name="Gillson C.J."/>
            <person name="Glithero R.J."/>
            <person name="Grafham D.V."/>
            <person name="Grant M."/>
            <person name="Gribble S."/>
            <person name="Griffiths C."/>
            <person name="Griffiths M.N.D."/>
            <person name="Hall R."/>
            <person name="Halls K.S."/>
            <person name="Hammond S."/>
            <person name="Harley J.L."/>
            <person name="Hart E.A."/>
            <person name="Heath P.D."/>
            <person name="Heathcott R."/>
            <person name="Holmes S.J."/>
            <person name="Howden P.J."/>
            <person name="Howe K.L."/>
            <person name="Howell G.R."/>
            <person name="Huckle E."/>
            <person name="Humphray S.J."/>
            <person name="Humphries M.D."/>
            <person name="Hunt A.R."/>
            <person name="Johnson C.M."/>
            <person name="Joy A.A."/>
            <person name="Kay M."/>
            <person name="Keenan S.J."/>
            <person name="Kimberley A.M."/>
            <person name="King A."/>
            <person name="Laird G.K."/>
            <person name="Langford C."/>
            <person name="Lawlor S."/>
            <person name="Leongamornlert D.A."/>
            <person name="Leversha M."/>
            <person name="Lloyd C.R."/>
            <person name="Lloyd D.M."/>
            <person name="Loveland J.E."/>
            <person name="Lovell J."/>
            <person name="Martin S."/>
            <person name="Mashreghi-Mohammadi M."/>
            <person name="Maslen G.L."/>
            <person name="Matthews L."/>
            <person name="McCann O.T."/>
            <person name="McLaren S.J."/>
            <person name="McLay K."/>
            <person name="McMurray A."/>
            <person name="Moore M.J.F."/>
            <person name="Mullikin J.C."/>
            <person name="Niblett D."/>
            <person name="Nickerson T."/>
            <person name="Novik K.L."/>
            <person name="Oliver K."/>
            <person name="Overton-Larty E.K."/>
            <person name="Parker A."/>
            <person name="Patel R."/>
            <person name="Pearce A.V."/>
            <person name="Peck A.I."/>
            <person name="Phillimore B.J.C.T."/>
            <person name="Phillips S."/>
            <person name="Plumb R.W."/>
            <person name="Porter K.M."/>
            <person name="Ramsey Y."/>
            <person name="Ranby S.A."/>
            <person name="Rice C.M."/>
            <person name="Ross M.T."/>
            <person name="Searle S.M."/>
            <person name="Sehra H.K."/>
            <person name="Sheridan E."/>
            <person name="Skuce C.D."/>
            <person name="Smith S."/>
            <person name="Smith M."/>
            <person name="Spraggon L."/>
            <person name="Squares S.L."/>
            <person name="Steward C.A."/>
            <person name="Sycamore N."/>
            <person name="Tamlyn-Hall G."/>
            <person name="Tester J."/>
            <person name="Theaker A.J."/>
            <person name="Thomas D.W."/>
            <person name="Thorpe A."/>
            <person name="Tracey A."/>
            <person name="Tromans A."/>
            <person name="Tubby B."/>
            <person name="Wall M."/>
            <person name="Wallis J.M."/>
            <person name="West A.P."/>
            <person name="White S.S."/>
            <person name="Whitehead S.L."/>
            <person name="Whittaker H."/>
            <person name="Wild A."/>
            <person name="Willey D.J."/>
            <person name="Wilmer T.E."/>
            <person name="Wood J.M."/>
            <person name="Wray P.W."/>
            <person name="Wyatt J.C."/>
            <person name="Young L."/>
            <person name="Younger R.M."/>
            <person name="Bentley D.R."/>
            <person name="Coulson A."/>
            <person name="Durbin R.M."/>
            <person name="Hubbard T."/>
            <person name="Sulston J.E."/>
            <person name="Dunham I."/>
            <person name="Rogers J."/>
            <person name="Beck S."/>
        </authorList>
    </citation>
    <scope>NUCLEOTIDE SEQUENCE [LARGE SCALE GENOMIC DNA]</scope>
</reference>
<reference key="7">
    <citation type="submission" date="2005-09" db="EMBL/GenBank/DDBJ databases">
        <authorList>
            <person name="Mural R.J."/>
            <person name="Istrail S."/>
            <person name="Sutton G.G."/>
            <person name="Florea L."/>
            <person name="Halpern A.L."/>
            <person name="Mobarry C.M."/>
            <person name="Lippert R."/>
            <person name="Walenz B."/>
            <person name="Shatkay H."/>
            <person name="Dew I."/>
            <person name="Miller J.R."/>
            <person name="Flanigan M.J."/>
            <person name="Edwards N.J."/>
            <person name="Bolanos R."/>
            <person name="Fasulo D."/>
            <person name="Halldorsson B.V."/>
            <person name="Hannenhalli S."/>
            <person name="Turner R."/>
            <person name="Yooseph S."/>
            <person name="Lu F."/>
            <person name="Nusskern D.R."/>
            <person name="Shue B.C."/>
            <person name="Zheng X.H."/>
            <person name="Zhong F."/>
            <person name="Delcher A.L."/>
            <person name="Huson D.H."/>
            <person name="Kravitz S.A."/>
            <person name="Mouchard L."/>
            <person name="Reinert K."/>
            <person name="Remington K.A."/>
            <person name="Clark A.G."/>
            <person name="Waterman M.S."/>
            <person name="Eichler E.E."/>
            <person name="Adams M.D."/>
            <person name="Hunkapiller M.W."/>
            <person name="Myers E.W."/>
            <person name="Venter J.C."/>
        </authorList>
    </citation>
    <scope>NUCLEOTIDE SEQUENCE [LARGE SCALE GENOMIC DNA]</scope>
</reference>
<reference key="8">
    <citation type="journal article" date="2004" name="Genome Res.">
        <title>The status, quality, and expansion of the NIH full-length cDNA project: the Mammalian Gene Collection (MGC).</title>
        <authorList>
            <consortium name="The MGC Project Team"/>
        </authorList>
    </citation>
    <scope>NUCLEOTIDE SEQUENCE [LARGE SCALE MRNA] (ISOFORMS 1 AND 2)</scope>
    <scope>VARIANT ILE-120</scope>
    <source>
        <tissue>Muscle</tissue>
        <tissue>Skin</tissue>
    </source>
</reference>
<reference key="9">
    <citation type="journal article" date="1996" name="Arch. Biochem. Biophys.">
        <title>Structure of the human gene encoding the protein repair L-isoaspartyl (D-aspartyl) O-methyltransferase.</title>
        <authorList>
            <person name="Devry C.G."/>
            <person name="Tsai W."/>
            <person name="Clarke S."/>
        </authorList>
    </citation>
    <scope>NUCLEOTIDE SEQUENCE [GENOMIC DNA] OF 1-18</scope>
    <source>
        <tissue>Foreskin</tissue>
    </source>
</reference>
<reference key="10">
    <citation type="journal article" date="1988" name="Biochemistry">
        <title>Purification of homologous protein carboxyl methyltransferase isozymes from human and bovine erythrocytes.</title>
        <authorList>
            <person name="Gilbert J.M."/>
            <person name="Fowler A."/>
            <person name="Bleibaum J."/>
            <person name="Clarke S."/>
        </authorList>
    </citation>
    <scope>PROTEIN SEQUENCE OF 5-19; 44-60; 106-170; 179-198 AND 205-220</scope>
    <scope>FUNCTION</scope>
    <scope>CATALYTIC ACTIVITY</scope>
    <scope>SUBCELLULAR LOCATION</scope>
</reference>
<reference key="11">
    <citation type="submission" date="2008-12" db="UniProtKB">
        <authorList>
            <person name="Lubec G."/>
            <person name="Afjehi-Sadat L."/>
            <person name="Chen W.-Q."/>
            <person name="Sun Y."/>
        </authorList>
    </citation>
    <scope>PROTEIN SEQUENCE OF 5-18; 25-37; 82-98; 114-144 AND 179-221</scope>
    <scope>VARIANT ILE-120</scope>
    <scope>IDENTIFICATION BY MASS SPECTROMETRY</scope>
    <source>
        <tissue>Brain</tissue>
        <tissue>Cajal-Retzius cell</tissue>
        <tissue>Fetal brain cortex</tissue>
    </source>
</reference>
<reference key="12">
    <citation type="journal article" date="1994" name="Biochem. Biophys. Res. Commun.">
        <title>Amino acid polymorphisms of the human L-isoaspartyl/D-aspartyl methyltransferase involved in protein repair.</title>
        <authorList>
            <person name="Tsai W."/>
            <person name="Clarke S."/>
        </authorList>
    </citation>
    <scope>NUCLEOTIDE SEQUENCE [GENOMIC DNA] OF 20-53; 100-139 AND 169-224</scope>
</reference>
<reference key="13">
    <citation type="journal article" date="1991" name="Biochem. Biophys. Res. Commun.">
        <title>Distinct C-terminal sequences of isozymes I and II of the human erythrocyte L-isoaspartyl/D-aspartyl protein methyltransferase.</title>
        <authorList>
            <person name="Ingrosso D."/>
            <person name="Kagan R.M."/>
            <person name="Clarke S."/>
        </authorList>
    </citation>
    <scope>PARTIAL PROTEIN SEQUENCE (ISOFORM 2)</scope>
    <scope>VARIANT ILE-120</scope>
    <source>
        <tissue>Erythrocyte</tissue>
    </source>
</reference>
<reference key="14">
    <citation type="journal article" date="1984" name="J. Biol. Chem.">
        <title>Synthetic peptide substrates for the erythrocyte protein carboxyl methyltransferase. Detection of a new site of methylation at isomerized L-aspartyl residues.</title>
        <authorList>
            <person name="Murray E.D. Jr."/>
            <person name="Clarke S."/>
        </authorList>
    </citation>
    <scope>FUNCTION</scope>
    <scope>CATALYTIC ACTIVITY</scope>
</reference>
<reference key="15">
    <citation type="journal article" date="2014" name="J. Proteomics">
        <title>An enzyme assisted RP-RPLC approach for in-depth analysis of human liver phosphoproteome.</title>
        <authorList>
            <person name="Bian Y."/>
            <person name="Song C."/>
            <person name="Cheng K."/>
            <person name="Dong M."/>
            <person name="Wang F."/>
            <person name="Huang J."/>
            <person name="Sun D."/>
            <person name="Wang L."/>
            <person name="Ye M."/>
            <person name="Zou H."/>
        </authorList>
    </citation>
    <scope>IDENTIFICATION BY MASS SPECTROMETRY [LARGE SCALE ANALYSIS]</scope>
    <source>
        <tissue>Liver</tissue>
    </source>
</reference>
<reference key="16">
    <citation type="journal article" date="2015" name="Proteomics">
        <title>N-terminome analysis of the human mitochondrial proteome.</title>
        <authorList>
            <person name="Vaca Jacome A.S."/>
            <person name="Rabilloud T."/>
            <person name="Schaeffer-Reiss C."/>
            <person name="Rompais M."/>
            <person name="Ayoub D."/>
            <person name="Lane L."/>
            <person name="Bairoch A."/>
            <person name="Van Dorsselaer A."/>
            <person name="Carapito C."/>
        </authorList>
    </citation>
    <scope>IDENTIFICATION BY MASS SPECTROMETRY [LARGE SCALE ANALYSIS]</scope>
</reference>
<reference key="17">
    <citation type="journal article" date="1999" name="J. Hum. Genet.">
        <title>Polymorphic forms of the protein L-isoaspartate (D-aspartate) O-methyltransferase involved in the repair of age-damaged proteins.</title>
        <authorList>
            <person name="DeVry C.G."/>
            <person name="Clarke S."/>
        </authorList>
    </citation>
    <scope>VARIANT ILE-120</scope>
</reference>
<reference evidence="20" key="18">
    <citation type="journal article" date="2002" name="J. Biol. Chem.">
        <title>Crystal structure of human L-isoaspartyl methyltransferase.</title>
        <authorList>
            <person name="Ryttersgaard C."/>
            <person name="Griffith S.C."/>
            <person name="Sawaya M.R."/>
            <person name="MacLaren D.C."/>
            <person name="Clarke S."/>
            <person name="Yeates T.O."/>
        </authorList>
    </citation>
    <scope>X-RAY CRYSTALLOGRAPHY (2.10 ANGSTROMS) OF 2-227 IN COMPLEX WITH S-ADENOSYL-L-HOMOCYSTEINE</scope>
</reference>
<reference evidence="19" key="19">
    <citation type="journal article" date="2002" name="Protein Sci.">
        <title>Crystal structure of human L-isoaspartyl-O-methyl-transferase with S-adenosyl homocysteine at 1.6-A resolution and modeling of an isoaspartyl-containing peptide at the active site.</title>
        <authorList>
            <person name="Smith C.D."/>
            <person name="Carson M."/>
            <person name="Friedman A.M."/>
            <person name="Skinner M.M."/>
            <person name="Delucas L."/>
            <person name="Chantalat L."/>
            <person name="Weise L."/>
            <person name="Shirasawa T."/>
            <person name="Chattopadhyay D."/>
        </authorList>
    </citation>
    <scope>X-RAY CRYSTALLOGRAPHY (1.50 ANGSTROMS) OF 2-227 IN COMPLEX WITH S-ADENOSYL-L-HOMOCYSTEINE</scope>
    <scope>SUBUNIT</scope>
</reference>
<reference key="20">
    <citation type="journal article" date="2011" name="BMC Syst. Biol.">
        <title>Initial characterization of the human central proteome.</title>
        <authorList>
            <person name="Burkard T.R."/>
            <person name="Planyavsky M."/>
            <person name="Kaupe I."/>
            <person name="Breitwieser F.P."/>
            <person name="Buerckstuemmer T."/>
            <person name="Bennett K.L."/>
            <person name="Superti-Furga G."/>
            <person name="Colinge J."/>
        </authorList>
    </citation>
    <scope>VARIANT [LARGE SCALE ANALYSIS] ILE-120</scope>
    <scope>IDENTIFICATION BY MASS SPECTROMETRY [LARGE SCALE ANALYSIS]</scope>
</reference>
<organism>
    <name type="scientific">Homo sapiens</name>
    <name type="common">Human</name>
    <dbReference type="NCBI Taxonomy" id="9606"/>
    <lineage>
        <taxon>Eukaryota</taxon>
        <taxon>Metazoa</taxon>
        <taxon>Chordata</taxon>
        <taxon>Craniata</taxon>
        <taxon>Vertebrata</taxon>
        <taxon>Euteleostomi</taxon>
        <taxon>Mammalia</taxon>
        <taxon>Eutheria</taxon>
        <taxon>Euarchontoglires</taxon>
        <taxon>Primates</taxon>
        <taxon>Haplorrhini</taxon>
        <taxon>Catarrhini</taxon>
        <taxon>Hominidae</taxon>
        <taxon>Homo</taxon>
    </lineage>
</organism>
<proteinExistence type="evidence at protein level"/>
<evidence type="ECO:0000250" key="1">
    <source>
        <dbReference type="UniProtKB" id="P23506"/>
    </source>
</evidence>
<evidence type="ECO:0000250" key="2">
    <source>
        <dbReference type="UniProtKB" id="Q27869"/>
    </source>
</evidence>
<evidence type="ECO:0000269" key="3">
    <source>
    </source>
</evidence>
<evidence type="ECO:0000269" key="4">
    <source>
    </source>
</evidence>
<evidence type="ECO:0000269" key="5">
    <source>
    </source>
</evidence>
<evidence type="ECO:0000269" key="6">
    <source>
    </source>
</evidence>
<evidence type="ECO:0000269" key="7">
    <source>
    </source>
</evidence>
<evidence type="ECO:0000269" key="8">
    <source>
    </source>
</evidence>
<evidence type="ECO:0000269" key="9">
    <source>
    </source>
</evidence>
<evidence type="ECO:0000269" key="10">
    <source>
    </source>
</evidence>
<evidence type="ECO:0000269" key="11">
    <source>
    </source>
</evidence>
<evidence type="ECO:0000269" key="12">
    <source ref="11"/>
</evidence>
<evidence type="ECO:0000303" key="13">
    <source>
    </source>
</evidence>
<evidence type="ECO:0000303" key="14">
    <source>
    </source>
</evidence>
<evidence type="ECO:0000303" key="15">
    <source>
    </source>
</evidence>
<evidence type="ECO:0000303" key="16">
    <source ref="4"/>
</evidence>
<evidence type="ECO:0000305" key="17"/>
<evidence type="ECO:0000305" key="18">
    <source>
    </source>
</evidence>
<evidence type="ECO:0007744" key="19">
    <source>
        <dbReference type="PDB" id="1I1N"/>
    </source>
</evidence>
<evidence type="ECO:0007744" key="20">
    <source>
        <dbReference type="PDB" id="1KR5"/>
    </source>
</evidence>
<evidence type="ECO:0007744" key="21">
    <source>
    </source>
</evidence>
<evidence type="ECO:0007829" key="22">
    <source>
        <dbReference type="PDB" id="1I1N"/>
    </source>
</evidence>
<evidence type="ECO:0007829" key="23">
    <source>
        <dbReference type="PDB" id="1KR5"/>
    </source>
</evidence>
<accession>P22061</accession>
<accession>A8K109</accession>
<accession>J3KP72</accession>
<accession>Q14661</accession>
<accession>Q16556</accession>
<accession>Q5VYC1</accession>
<accession>Q5VYC2</accession>
<accession>Q93061</accession>
<accession>Q96II9</accession>
<accession>Q99625</accession>
<accession>Q9BQV7</accession>
<accession>Q9BQV8</accession>
<accession>Q9NP03</accession>
<keyword id="KW-0002">3D-structure</keyword>
<keyword id="KW-0007">Acetylation</keyword>
<keyword id="KW-0025">Alternative splicing</keyword>
<keyword id="KW-0963">Cytoplasm</keyword>
<keyword id="KW-0903">Direct protein sequencing</keyword>
<keyword id="KW-0489">Methyltransferase</keyword>
<keyword id="KW-1267">Proteomics identification</keyword>
<keyword id="KW-1185">Reference proteome</keyword>
<keyword id="KW-0949">S-adenosyl-L-methionine</keyword>
<keyword id="KW-0808">Transferase</keyword>
<feature type="initiator methionine" description="Removed" evidence="9">
    <location>
        <position position="1"/>
    </location>
</feature>
<feature type="chain" id="PRO_0000111875" description="Protein-L-isoaspartate(D-aspartate) O-methyltransferase">
    <location>
        <begin position="2"/>
        <end position="227"/>
    </location>
</feature>
<feature type="active site" evidence="2">
    <location>
        <position position="60"/>
    </location>
</feature>
<feature type="binding site" evidence="4 5 19 20">
    <location>
        <begin position="57"/>
        <end position="60"/>
    </location>
    <ligand>
        <name>S-adenosyl-L-homocysteine</name>
        <dbReference type="ChEBI" id="CHEBI:57856"/>
    </ligand>
</feature>
<feature type="binding site" evidence="4 5 19 20">
    <location>
        <position position="65"/>
    </location>
    <ligand>
        <name>S-adenosyl-L-homocysteine</name>
        <dbReference type="ChEBI" id="CHEBI:57856"/>
    </ligand>
</feature>
<feature type="binding site" evidence="4 5 19 20">
    <location>
        <position position="89"/>
    </location>
    <ligand>
        <name>S-adenosyl-L-homocysteine</name>
        <dbReference type="ChEBI" id="CHEBI:57856"/>
    </ligand>
</feature>
<feature type="binding site" evidence="4 5 19 20">
    <location>
        <begin position="110"/>
        <end position="111"/>
    </location>
    <ligand>
        <name>S-adenosyl-L-homocysteine</name>
        <dbReference type="ChEBI" id="CHEBI:57856"/>
    </ligand>
</feature>
<feature type="binding site" evidence="4 5 19 20">
    <location>
        <begin position="142"/>
        <end position="143"/>
    </location>
    <ligand>
        <name>S-adenosyl-L-homocysteine</name>
        <dbReference type="ChEBI" id="CHEBI:57856"/>
    </ligand>
</feature>
<feature type="binding site" evidence="4 5 19 20">
    <location>
        <position position="217"/>
    </location>
    <ligand>
        <name>S-adenosyl-L-homocysteine</name>
        <dbReference type="ChEBI" id="CHEBI:57856"/>
    </ligand>
</feature>
<feature type="binding site" evidence="4 5 19 20">
    <location>
        <position position="222"/>
    </location>
    <ligand>
        <name>S-adenosyl-L-homocysteine</name>
        <dbReference type="ChEBI" id="CHEBI:57856"/>
    </ligand>
</feature>
<feature type="modified residue" description="N-acetylalanine" evidence="9">
    <location>
        <position position="2"/>
    </location>
</feature>
<feature type="splice variant" id="VSP_004716" description="In isoform 2." evidence="13 14 15 16">
    <original>WK</original>
    <variation>DEL</variation>
    <location>
        <begin position="226"/>
        <end position="227"/>
    </location>
</feature>
<feature type="sequence variant" id="VAR_006173" description="In dbSNP:rs4816." evidence="3 6 7 8 12 21">
    <original>V</original>
    <variation>I</variation>
    <location>
        <position position="120"/>
    </location>
</feature>
<feature type="sequence conflict" description="In Ref. 10; AA sequence." evidence="17" ref="10">
    <original>K</original>
    <variation>G</variation>
    <location>
        <position position="19"/>
    </location>
</feature>
<feature type="sequence conflict" description="In Ref. 1; AA sequence." evidence="17" ref="1">
    <original>I</original>
    <variation>L</variation>
    <location>
        <position position="23"/>
    </location>
</feature>
<feature type="sequence conflict" description="In Ref. 10; AA sequence." evidence="17" ref="10">
    <original>S</original>
    <variation>A</variation>
    <location>
        <position position="60"/>
    </location>
</feature>
<feature type="sequence conflict" description="In Ref. 1; AA sequence." evidence="17" ref="1">
    <original>C</original>
    <variation>Q</variation>
    <location>
        <position position="102"/>
    </location>
</feature>
<feature type="sequence conflict" description="In Ref. 10; AA sequence." evidence="17" ref="10">
    <original>A</original>
    <variation>P</variation>
    <location>
        <position position="168"/>
    </location>
</feature>
<feature type="sequence conflict" description="In Ref. 2; AAA90933." evidence="17" ref="2">
    <original>K</original>
    <variation>R</variation>
    <location>
        <position position="206"/>
    </location>
</feature>
<feature type="helix" evidence="22">
    <location>
        <begin position="10"/>
        <end position="19"/>
    </location>
</feature>
<feature type="helix" evidence="22">
    <location>
        <begin position="26"/>
        <end position="33"/>
    </location>
</feature>
<feature type="helix" evidence="22">
    <location>
        <begin position="37"/>
        <end position="39"/>
    </location>
</feature>
<feature type="strand" evidence="22">
    <location>
        <begin position="47"/>
        <end position="49"/>
    </location>
</feature>
<feature type="strand" evidence="22">
    <location>
        <begin position="51"/>
        <end position="54"/>
    </location>
</feature>
<feature type="strand" evidence="22">
    <location>
        <begin position="57"/>
        <end position="59"/>
    </location>
</feature>
<feature type="helix" evidence="22">
    <location>
        <begin position="62"/>
        <end position="71"/>
    </location>
</feature>
<feature type="turn" evidence="22">
    <location>
        <begin position="72"/>
        <end position="75"/>
    </location>
</feature>
<feature type="strand" evidence="22">
    <location>
        <begin position="81"/>
        <end position="85"/>
    </location>
</feature>
<feature type="helix" evidence="22">
    <location>
        <begin position="91"/>
        <end position="100"/>
    </location>
</feature>
<feature type="turn" evidence="23">
    <location>
        <begin position="101"/>
        <end position="103"/>
    </location>
</feature>
<feature type="strand" evidence="22">
    <location>
        <begin position="105"/>
        <end position="111"/>
    </location>
</feature>
<feature type="helix" evidence="22">
    <location>
        <begin position="113"/>
        <end position="126"/>
    </location>
</feature>
<feature type="helix" evidence="22">
    <location>
        <begin position="129"/>
        <end position="132"/>
    </location>
</feature>
<feature type="strand" evidence="22">
    <location>
        <begin position="134"/>
        <end position="141"/>
    </location>
</feature>
<feature type="helix" evidence="22">
    <location>
        <begin position="143"/>
        <end position="145"/>
    </location>
</feature>
<feature type="helix" evidence="22">
    <location>
        <begin position="148"/>
        <end position="150"/>
    </location>
</feature>
<feature type="strand" evidence="22">
    <location>
        <begin position="153"/>
        <end position="158"/>
    </location>
</feature>
<feature type="strand" evidence="22">
    <location>
        <begin position="160"/>
        <end position="164"/>
    </location>
</feature>
<feature type="helix" evidence="22">
    <location>
        <begin position="167"/>
        <end position="171"/>
    </location>
</feature>
<feature type="strand" evidence="22">
    <location>
        <begin position="173"/>
        <end position="184"/>
    </location>
</feature>
<feature type="strand" evidence="22">
    <location>
        <begin position="190"/>
        <end position="197"/>
    </location>
</feature>
<feature type="strand" evidence="22">
    <location>
        <begin position="203"/>
        <end position="211"/>
    </location>
</feature>
<feature type="helix" evidence="22">
    <location>
        <begin position="219"/>
        <end position="222"/>
    </location>
</feature>
<comment type="function">
    <text evidence="1 10 11">Initiates the repair of damaged proteins by catalyzing methyl esterification of L-isoaspartyl and D-aspartyl residues produced by spontaneous isomerization and racemization of L-aspartyl and L-asparaginyl residues in aging peptides and proteins (PubMed:3167043, PubMed:6469980). Acts on EIF4EBP2, microtubule-associated protein 2, calreticulin, clathrin light chains a and b, Ubiquitin C-terminal hydrolase isozyme L1, phosphatidylethanolamine-binding protein 1, stathmin, beta-synuclein and alpha-synuclein (By similarity).</text>
</comment>
<comment type="catalytic activity">
    <reaction evidence="10 11">
        <text>[protein]-L-isoaspartate + S-adenosyl-L-methionine = [protein]-L-isoaspartate alpha-methyl ester + S-adenosyl-L-homocysteine</text>
        <dbReference type="Rhea" id="RHEA:12705"/>
        <dbReference type="Rhea" id="RHEA-COMP:12143"/>
        <dbReference type="Rhea" id="RHEA-COMP:12144"/>
        <dbReference type="ChEBI" id="CHEBI:57856"/>
        <dbReference type="ChEBI" id="CHEBI:59789"/>
        <dbReference type="ChEBI" id="CHEBI:90596"/>
        <dbReference type="ChEBI" id="CHEBI:90598"/>
        <dbReference type="EC" id="2.1.1.77"/>
    </reaction>
    <physiologicalReaction direction="left-to-right" evidence="18">
        <dbReference type="Rhea" id="RHEA:12706"/>
    </physiologicalReaction>
</comment>
<comment type="subunit">
    <text evidence="5">Monomer.</text>
</comment>
<comment type="interaction">
    <interactant intactId="EBI-353343">
        <id>P22061</id>
    </interactant>
    <interactant intactId="EBI-745226">
        <id>Q13155</id>
        <label>AIMP2</label>
    </interactant>
    <organismsDiffer>false</organismsDiffer>
    <experiments>3</experiments>
</comment>
<comment type="interaction">
    <interactant intactId="EBI-353343">
        <id>P22061</id>
    </interactant>
    <interactant intactId="EBI-744831">
        <id>P49247</id>
        <label>RPIA</label>
    </interactant>
    <organismsDiffer>false</organismsDiffer>
    <experiments>4</experiments>
</comment>
<comment type="interaction">
    <interactant intactId="EBI-353343">
        <id>P22061</id>
    </interactant>
    <interactant intactId="EBI-25475864">
        <id>PRO_0000449623</id>
        <label>rep</label>
        <dbReference type="UniProtKB" id="P0DTD1"/>
    </interactant>
    <organismsDiffer>true</organismsDiffer>
    <experiments>2</experiments>
</comment>
<comment type="interaction">
    <interactant intactId="EBI-12386584">
        <id>P22061-2</id>
    </interactant>
    <interactant intactId="EBI-21535880">
        <id>Q92870-2</id>
        <label>APBB2</label>
    </interactant>
    <organismsDiffer>false</organismsDiffer>
    <experiments>3</experiments>
</comment>
<comment type="interaction">
    <interactant intactId="EBI-12386584">
        <id>P22061-2</id>
    </interactant>
    <interactant intactId="EBI-930964">
        <id>P54253</id>
        <label>ATXN1</label>
    </interactant>
    <organismsDiffer>false</organismsDiffer>
    <experiments>3</experiments>
</comment>
<comment type="interaction">
    <interactant intactId="EBI-12386584">
        <id>P22061-2</id>
    </interactant>
    <interactant intactId="EBI-2559831">
        <id>Q92989</id>
        <label>CLP1</label>
    </interactant>
    <organismsDiffer>false</organismsDiffer>
    <experiments>3</experiments>
</comment>
<comment type="interaction">
    <interactant intactId="EBI-12386584">
        <id>P22061-2</id>
    </interactant>
    <interactant intactId="EBI-21553822">
        <id>Q96A83-2</id>
        <label>COL26A1</label>
    </interactant>
    <organismsDiffer>false</organismsDiffer>
    <experiments>3</experiments>
</comment>
<comment type="interaction">
    <interactant intactId="EBI-12386584">
        <id>P22061-2</id>
    </interactant>
    <interactant intactId="EBI-10976677">
        <id>G5E9A7</id>
        <label>DMWD</label>
    </interactant>
    <organismsDiffer>false</organismsDiffer>
    <experiments>3</experiments>
</comment>
<comment type="interaction">
    <interactant intactId="EBI-12386584">
        <id>P22061-2</id>
    </interactant>
    <interactant intactId="EBI-11944935">
        <id>Q15051-2</id>
        <label>IQCB1</label>
    </interactant>
    <organismsDiffer>false</organismsDiffer>
    <experiments>3</experiments>
</comment>
<comment type="interaction">
    <interactant intactId="EBI-12386584">
        <id>P22061-2</id>
    </interactant>
    <interactant intactId="EBI-10975473">
        <id>O60333-2</id>
        <label>KIF1B</label>
    </interactant>
    <organismsDiffer>false</organismsDiffer>
    <experiments>3</experiments>
</comment>
<comment type="interaction">
    <interactant intactId="EBI-12386584">
        <id>P22061-2</id>
    </interactant>
    <interactant intactId="EBI-948266">
        <id>O14901</id>
        <label>KLF11</label>
    </interactant>
    <organismsDiffer>false</organismsDiffer>
    <experiments>3</experiments>
</comment>
<comment type="interaction">
    <interactant intactId="EBI-12386584">
        <id>P22061-2</id>
    </interactant>
    <interactant intactId="EBI-6190702">
        <id>P28331-2</id>
        <label>NDUFS1</label>
    </interactant>
    <organismsDiffer>false</organismsDiffer>
    <experiments>3</experiments>
</comment>
<comment type="interaction">
    <interactant intactId="EBI-12386584">
        <id>P22061-2</id>
    </interactant>
    <interactant intactId="EBI-749195">
        <id>P60891</id>
        <label>PRPS1</label>
    </interactant>
    <organismsDiffer>false</organismsDiffer>
    <experiments>3</experiments>
</comment>
<comment type="interaction">
    <interactant intactId="EBI-12386584">
        <id>P22061-2</id>
    </interactant>
    <interactant intactId="EBI-744831">
        <id>P49247</id>
        <label>RPIA</label>
    </interactant>
    <organismsDiffer>false</organismsDiffer>
    <experiments>4</experiments>
</comment>
<comment type="interaction">
    <interactant intactId="EBI-12386584">
        <id>P22061-2</id>
    </interactant>
    <interactant intactId="EBI-5235340">
        <id>Q7Z699</id>
        <label>SPRED1</label>
    </interactant>
    <organismsDiffer>false</organismsDiffer>
    <experiments>3</experiments>
</comment>
<comment type="interaction">
    <interactant intactId="EBI-12386584">
        <id>P22061-2</id>
    </interactant>
    <interactant intactId="EBI-720609">
        <id>O76024</id>
        <label>WFS1</label>
    </interactant>
    <organismsDiffer>false</organismsDiffer>
    <experiments>3</experiments>
</comment>
<comment type="subcellular location">
    <subcellularLocation>
        <location evidence="10">Cytoplasm</location>
        <location evidence="10">Cytosol</location>
    </subcellularLocation>
</comment>
<comment type="alternative products">
    <event type="alternative splicing"/>
    <isoform>
        <id>P22061-1</id>
        <name>1</name>
        <sequence type="displayed"/>
    </isoform>
    <isoform>
        <id>P22061-2</id>
        <name>2</name>
        <sequence type="described" ref="VSP_004716"/>
    </isoform>
</comment>
<comment type="polymorphism">
    <text>The allele frequencies for the polymorphism at codon 120 differ between ethnic groups; in the Caucasian population Ile-120 is present at a frequency of 0.45, while it is found at a frequency of 0.88 and 0.81 in the Asian and the African populations respectively. Val-120 is found at a frequency of 0.55 in the Caucasians, 0.12 and 0.19 in the Asian and African populations respectively. The Ile-120 variant has higher specific activity and thermostability than the Val-120 variant. The Val-120 variant has a higher affinity for protein substrates.</text>
</comment>
<comment type="similarity">
    <text evidence="17">Belongs to the methyltransferase superfamily. L-isoaspartyl/D-aspartyl protein methyltransferase family.</text>
</comment>
<comment type="sequence caution" evidence="17">
    <conflict type="erroneous gene model prediction">
        <sequence resource="EMBL-CDS" id="EAW47786"/>
    </conflict>
</comment>
<dbReference type="EC" id="2.1.1.77" evidence="10 11"/>
<dbReference type="EMBL" id="M93008">
    <property type="protein sequence ID" value="AAA90934.1"/>
    <property type="molecule type" value="mRNA"/>
</dbReference>
<dbReference type="EMBL" id="M93009">
    <property type="protein sequence ID" value="AAA90933.1"/>
    <property type="molecule type" value="mRNA"/>
</dbReference>
<dbReference type="EMBL" id="D25545">
    <property type="protein sequence ID" value="BAA05028.1"/>
    <property type="molecule type" value="mRNA"/>
</dbReference>
<dbReference type="EMBL" id="D25546">
    <property type="protein sequence ID" value="BAA05029.1"/>
    <property type="molecule type" value="mRNA"/>
</dbReference>
<dbReference type="EMBL" id="D25547">
    <property type="protein sequence ID" value="BAA05030.1"/>
    <property type="molecule type" value="mRNA"/>
</dbReference>
<dbReference type="EMBL" id="D13892">
    <property type="protein sequence ID" value="BAA02991.1"/>
    <property type="molecule type" value="mRNA"/>
</dbReference>
<dbReference type="EMBL" id="AK289724">
    <property type="protein sequence ID" value="BAF82413.1"/>
    <property type="molecule type" value="mRNA"/>
</dbReference>
<dbReference type="EMBL" id="AL355312">
    <property type="status" value="NOT_ANNOTATED_CDS"/>
    <property type="molecule type" value="Genomic_DNA"/>
</dbReference>
<dbReference type="EMBL" id="CH471051">
    <property type="protein sequence ID" value="EAW47786.1"/>
    <property type="status" value="ALT_SEQ"/>
    <property type="molecule type" value="Genomic_DNA"/>
</dbReference>
<dbReference type="EMBL" id="BC007501">
    <property type="protein sequence ID" value="AAH07501.1"/>
    <property type="molecule type" value="mRNA"/>
</dbReference>
<dbReference type="EMBL" id="BC008748">
    <property type="protein sequence ID" value="AAH08748.1"/>
    <property type="molecule type" value="mRNA"/>
</dbReference>
<dbReference type="EMBL" id="U49740">
    <property type="protein sequence ID" value="AAB38386.1"/>
    <property type="molecule type" value="Genomic_DNA"/>
</dbReference>
<dbReference type="EMBL" id="S73902">
    <property type="protein sequence ID" value="AAC60639.2"/>
    <property type="molecule type" value="Genomic_DNA"/>
</dbReference>
<dbReference type="EMBL" id="S73903">
    <property type="protein sequence ID" value="AAC60640.1"/>
    <property type="molecule type" value="Genomic_DNA"/>
</dbReference>
<dbReference type="EMBL" id="S73905">
    <property type="protein sequence ID" value="AAC60641.2"/>
    <property type="molecule type" value="Genomic_DNA"/>
</dbReference>
<dbReference type="CCDS" id="CCDS59041.2">
    <molecule id="P22061-2"/>
</dbReference>
<dbReference type="CCDS" id="CCDS94017.1">
    <molecule id="P22061-1"/>
</dbReference>
<dbReference type="PIR" id="A34489">
    <property type="entry name" value="A34489"/>
</dbReference>
<dbReference type="PIR" id="JH0624">
    <property type="entry name" value="JH0624"/>
</dbReference>
<dbReference type="RefSeq" id="NP_001238978.1">
    <property type="nucleotide sequence ID" value="NM_001252049.1"/>
</dbReference>
<dbReference type="RefSeq" id="NP_001238982.1">
    <property type="nucleotide sequence ID" value="NM_001252053.1"/>
</dbReference>
<dbReference type="RefSeq" id="NP_001347381.1">
    <molecule id="P22061-1"/>
    <property type="nucleotide sequence ID" value="NM_001360452.2"/>
</dbReference>
<dbReference type="RefSeq" id="NP_001347385.1">
    <molecule id="P22061-2"/>
    <property type="nucleotide sequence ID" value="NM_001360456.1"/>
</dbReference>
<dbReference type="RefSeq" id="NP_005380.2">
    <property type="nucleotide sequence ID" value="NM_005389.2"/>
</dbReference>
<dbReference type="PDB" id="1I1N">
    <property type="method" value="X-ray"/>
    <property type="resolution" value="1.50 A"/>
    <property type="chains" value="A=2-227"/>
</dbReference>
<dbReference type="PDB" id="1KR5">
    <property type="method" value="X-ray"/>
    <property type="resolution" value="2.10 A"/>
    <property type="chains" value="A=2-227"/>
</dbReference>
<dbReference type="PDBsum" id="1I1N"/>
<dbReference type="PDBsum" id="1KR5"/>
<dbReference type="SMR" id="P22061"/>
<dbReference type="BioGRID" id="111141">
    <property type="interactions" value="265"/>
</dbReference>
<dbReference type="FunCoup" id="P22061">
    <property type="interactions" value="1317"/>
</dbReference>
<dbReference type="IntAct" id="P22061">
    <property type="interactions" value="114"/>
</dbReference>
<dbReference type="MINT" id="P22061"/>
<dbReference type="STRING" id="9606.ENSP00000497225"/>
<dbReference type="BindingDB" id="P22061"/>
<dbReference type="ChEMBL" id="CHEMBL4240"/>
<dbReference type="DrugBank" id="DB01752">
    <property type="generic name" value="S-adenosyl-L-homocysteine"/>
</dbReference>
<dbReference type="DrugCentral" id="P22061"/>
<dbReference type="GlyCosmos" id="P22061">
    <property type="glycosylation" value="2 sites, 2 glycans"/>
</dbReference>
<dbReference type="GlyGen" id="P22061">
    <property type="glycosylation" value="2 sites, 2 O-linked glycans (2 sites)"/>
</dbReference>
<dbReference type="iPTMnet" id="P22061"/>
<dbReference type="MetOSite" id="P22061"/>
<dbReference type="PhosphoSitePlus" id="P22061"/>
<dbReference type="SwissPalm" id="P22061"/>
<dbReference type="BioMuta" id="PCMT1"/>
<dbReference type="DMDM" id="317373537"/>
<dbReference type="OGP" id="P22061"/>
<dbReference type="REPRODUCTION-2DPAGE" id="IPI00411680"/>
<dbReference type="jPOST" id="P22061"/>
<dbReference type="MassIVE" id="P22061"/>
<dbReference type="PaxDb" id="9606-ENSP00000356354"/>
<dbReference type="PeptideAtlas" id="P22061"/>
<dbReference type="ProteomicsDB" id="53955">
    <molecule id="P22061-1"/>
</dbReference>
<dbReference type="ProteomicsDB" id="53956">
    <molecule id="P22061-2"/>
</dbReference>
<dbReference type="Pumba" id="P22061"/>
<dbReference type="Antibodypedia" id="759">
    <property type="antibodies" value="277 antibodies from 31 providers"/>
</dbReference>
<dbReference type="DNASU" id="5110"/>
<dbReference type="Ensembl" id="ENST00000367378.6">
    <molecule id="P22061-1"/>
    <property type="protein sequence ID" value="ENSP00000356348.2"/>
    <property type="gene ID" value="ENSG00000120265.21"/>
</dbReference>
<dbReference type="Ensembl" id="ENST00000367384.8">
    <molecule id="P22061-2"/>
    <property type="protein sequence ID" value="ENSP00000356354.3"/>
    <property type="gene ID" value="ENSG00000120265.21"/>
</dbReference>
<dbReference type="Ensembl" id="ENST00000464889.7">
    <molecule id="P22061-1"/>
    <property type="protein sequence ID" value="ENSP00000420813.2"/>
    <property type="gene ID" value="ENSG00000120265.21"/>
</dbReference>
<dbReference type="GeneID" id="5110"/>
<dbReference type="KEGG" id="hsa:5110"/>
<dbReference type="MANE-Select" id="ENST00000464889.7">
    <property type="protein sequence ID" value="ENSP00000420813.2"/>
    <property type="RefSeq nucleotide sequence ID" value="NM_001360452.2"/>
    <property type="RefSeq protein sequence ID" value="NP_001347381.1"/>
</dbReference>
<dbReference type="UCSC" id="uc011eeg.3">
    <molecule id="P22061-1"/>
    <property type="organism name" value="human"/>
</dbReference>
<dbReference type="AGR" id="HGNC:8728"/>
<dbReference type="CTD" id="5110"/>
<dbReference type="DisGeNET" id="5110"/>
<dbReference type="GeneCards" id="PCMT1"/>
<dbReference type="HGNC" id="HGNC:8728">
    <property type="gene designation" value="PCMT1"/>
</dbReference>
<dbReference type="HPA" id="ENSG00000120265">
    <property type="expression patterns" value="Low tissue specificity"/>
</dbReference>
<dbReference type="MIM" id="176851">
    <property type="type" value="gene"/>
</dbReference>
<dbReference type="neXtProt" id="NX_P22061"/>
<dbReference type="OpenTargets" id="ENSG00000120265"/>
<dbReference type="VEuPathDB" id="HostDB:ENSG00000120265"/>
<dbReference type="eggNOG" id="KOG1661">
    <property type="taxonomic scope" value="Eukaryota"/>
</dbReference>
<dbReference type="GeneTree" id="ENSGT00950000183032"/>
<dbReference type="InParanoid" id="P22061"/>
<dbReference type="OMA" id="HMHASAC"/>
<dbReference type="OrthoDB" id="73890at2759"/>
<dbReference type="PAN-GO" id="P22061">
    <property type="GO annotations" value="2 GO annotations based on evolutionary models"/>
</dbReference>
<dbReference type="PhylomeDB" id="P22061"/>
<dbReference type="TreeFam" id="TF314431"/>
<dbReference type="BioCyc" id="MetaCyc:HS04385-MONOMER"/>
<dbReference type="BRENDA" id="2.1.1.77">
    <property type="organism ID" value="2681"/>
</dbReference>
<dbReference type="PathwayCommons" id="P22061"/>
<dbReference type="Reactome" id="R-HSA-5676934">
    <property type="pathway name" value="Protein repair"/>
</dbReference>
<dbReference type="SABIO-RK" id="P22061"/>
<dbReference type="SignaLink" id="P22061"/>
<dbReference type="BioGRID-ORCS" id="5110">
    <property type="hits" value="21 hits in 1159 CRISPR screens"/>
</dbReference>
<dbReference type="CD-CODE" id="DEE660B4">
    <property type="entry name" value="Stress granule"/>
</dbReference>
<dbReference type="CD-CODE" id="FB4E32DD">
    <property type="entry name" value="Presynaptic clusters and postsynaptic densities"/>
</dbReference>
<dbReference type="ChiTaRS" id="PCMT1">
    <property type="organism name" value="human"/>
</dbReference>
<dbReference type="EvolutionaryTrace" id="P22061"/>
<dbReference type="GeneWiki" id="PCMT1"/>
<dbReference type="GenomeRNAi" id="5110"/>
<dbReference type="Pharos" id="P22061">
    <property type="development level" value="Tbio"/>
</dbReference>
<dbReference type="PRO" id="PR:P22061"/>
<dbReference type="Proteomes" id="UP000005640">
    <property type="component" value="Chromosome 6"/>
</dbReference>
<dbReference type="RNAct" id="P22061">
    <property type="molecule type" value="protein"/>
</dbReference>
<dbReference type="Bgee" id="ENSG00000120265">
    <property type="expression patterns" value="Expressed in endothelial cell and 213 other cell types or tissues"/>
</dbReference>
<dbReference type="ExpressionAtlas" id="P22061">
    <property type="expression patterns" value="baseline and differential"/>
</dbReference>
<dbReference type="GO" id="GO:0005737">
    <property type="term" value="C:cytoplasm"/>
    <property type="evidence" value="ECO:0000318"/>
    <property type="project" value="GO_Central"/>
</dbReference>
<dbReference type="GO" id="GO:0005829">
    <property type="term" value="C:cytosol"/>
    <property type="evidence" value="ECO:0000314"/>
    <property type="project" value="HPA"/>
</dbReference>
<dbReference type="GO" id="GO:0070062">
    <property type="term" value="C:extracellular exosome"/>
    <property type="evidence" value="ECO:0007005"/>
    <property type="project" value="UniProtKB"/>
</dbReference>
<dbReference type="GO" id="GO:1903561">
    <property type="term" value="C:extracellular vesicle"/>
    <property type="evidence" value="ECO:0007005"/>
    <property type="project" value="UniProtKB"/>
</dbReference>
<dbReference type="GO" id="GO:0045296">
    <property type="term" value="F:cadherin binding"/>
    <property type="evidence" value="ECO:0007005"/>
    <property type="project" value="BHF-UCL"/>
</dbReference>
<dbReference type="GO" id="GO:0004719">
    <property type="term" value="F:protein-L-isoaspartate (D-aspartate) O-methyltransferase activity"/>
    <property type="evidence" value="ECO:0000314"/>
    <property type="project" value="UniProtKB"/>
</dbReference>
<dbReference type="GO" id="GO:0006479">
    <property type="term" value="P:protein methylation"/>
    <property type="evidence" value="ECO:0000314"/>
    <property type="project" value="UniProtKB"/>
</dbReference>
<dbReference type="GO" id="GO:0030091">
    <property type="term" value="P:protein repair"/>
    <property type="evidence" value="ECO:0000304"/>
    <property type="project" value="UniProtKB"/>
</dbReference>
<dbReference type="CDD" id="cd02440">
    <property type="entry name" value="AdoMet_MTases"/>
    <property type="match status" value="1"/>
</dbReference>
<dbReference type="FunFam" id="3.40.50.150:FF:000027">
    <property type="entry name" value="Protein-L-isoaspartate O-methyltransferase"/>
    <property type="match status" value="1"/>
</dbReference>
<dbReference type="Gene3D" id="3.40.50.150">
    <property type="entry name" value="Vaccinia Virus protein VP39"/>
    <property type="match status" value="1"/>
</dbReference>
<dbReference type="InterPro" id="IPR000682">
    <property type="entry name" value="PCMT"/>
</dbReference>
<dbReference type="InterPro" id="IPR029063">
    <property type="entry name" value="SAM-dependent_MTases_sf"/>
</dbReference>
<dbReference type="NCBIfam" id="TIGR00080">
    <property type="entry name" value="pimt"/>
    <property type="match status" value="1"/>
</dbReference>
<dbReference type="PANTHER" id="PTHR11579">
    <property type="entry name" value="PROTEIN-L-ISOASPARTATE O-METHYLTRANSFERASE"/>
    <property type="match status" value="1"/>
</dbReference>
<dbReference type="PANTHER" id="PTHR11579:SF7">
    <property type="entry name" value="PROTEIN-L-ISOASPARTATE(D-ASPARTATE) O-METHYLTRANSFERASE"/>
    <property type="match status" value="1"/>
</dbReference>
<dbReference type="Pfam" id="PF01135">
    <property type="entry name" value="PCMT"/>
    <property type="match status" value="1"/>
</dbReference>
<dbReference type="SUPFAM" id="SSF53335">
    <property type="entry name" value="S-adenosyl-L-methionine-dependent methyltransferases"/>
    <property type="match status" value="1"/>
</dbReference>
<dbReference type="PROSITE" id="PS01279">
    <property type="entry name" value="PCMT"/>
    <property type="match status" value="1"/>
</dbReference>
<gene>
    <name type="primary">PCMT1</name>
</gene>
<protein>
    <recommendedName>
        <fullName evidence="18">Protein-L-isoaspartate(D-aspartate) O-methyltransferase</fullName>
        <shortName>PIMT</shortName>
        <ecNumber evidence="10 11">2.1.1.77</ecNumber>
    </recommendedName>
    <alternativeName>
        <fullName>L-isoaspartyl protein carboxyl methyltransferase</fullName>
    </alternativeName>
    <alternativeName>
        <fullName>Protein L-isoaspartyl/D-aspartyl methyltransferase</fullName>
    </alternativeName>
    <alternativeName>
        <fullName>Protein-beta-aspartate methyltransferase</fullName>
    </alternativeName>
</protein>